<feature type="chain" id="PRO_0000453880" description="DNA-directed RNA polymerase subunit Rpo8">
    <location>
        <begin position="1"/>
        <end position="131"/>
    </location>
</feature>
<feature type="strand" evidence="13">
    <location>
        <begin position="8"/>
        <end position="12"/>
    </location>
</feature>
<feature type="strand" evidence="13">
    <location>
        <begin position="17"/>
        <end position="19"/>
    </location>
</feature>
<feature type="strand" evidence="13">
    <location>
        <begin position="25"/>
        <end position="29"/>
    </location>
</feature>
<feature type="strand" evidence="13">
    <location>
        <begin position="32"/>
        <end position="43"/>
    </location>
</feature>
<feature type="strand" evidence="13">
    <location>
        <begin position="55"/>
        <end position="61"/>
    </location>
</feature>
<feature type="strand" evidence="13">
    <location>
        <begin position="69"/>
        <end position="72"/>
    </location>
</feature>
<feature type="strand" evidence="13">
    <location>
        <begin position="74"/>
        <end position="78"/>
    </location>
</feature>
<feature type="turn" evidence="13">
    <location>
        <begin position="79"/>
        <end position="82"/>
    </location>
</feature>
<feature type="strand" evidence="13">
    <location>
        <begin position="83"/>
        <end position="86"/>
    </location>
</feature>
<feature type="strand" evidence="13">
    <location>
        <begin position="89"/>
        <end position="96"/>
    </location>
</feature>
<feature type="helix" evidence="13">
    <location>
        <begin position="99"/>
        <end position="104"/>
    </location>
</feature>
<feature type="strand" evidence="13">
    <location>
        <begin position="107"/>
        <end position="115"/>
    </location>
</feature>
<gene>
    <name evidence="1 5" type="primary">rpo8</name>
    <name evidence="1" type="synonym">rpoG</name>
    <name evidence="7" type="ORF">J5U23_03191</name>
</gene>
<sequence>MESKAQEIILSCEINSIERGSLKNLSIIHMSCNDFNISFDIIDSINIFSQKEKVKAFISKNRLSYTNDDFCGHGYIVTELKDSSSNNGNRYITIISLFGLLVKIISNKESFLKIHQLNVMDHIYFCVKKNT</sequence>
<accession>B8YB59</accession>
<accession>A0A8F5BS45</accession>
<dbReference type="EC" id="2.7.7.6" evidence="1"/>
<dbReference type="EMBL" id="FJ515671">
    <property type="protein sequence ID" value="ACL36494.1"/>
    <property type="status" value="ALT_INIT"/>
    <property type="molecule type" value="Genomic_DNA"/>
</dbReference>
<dbReference type="EMBL" id="CP077717">
    <property type="protein sequence ID" value="QXJ30293.1"/>
    <property type="molecule type" value="Genomic_DNA"/>
</dbReference>
<dbReference type="PDB" id="2WAQ">
    <property type="method" value="X-ray"/>
    <property type="resolution" value="3.35 A"/>
    <property type="chains" value="G=1-131"/>
</dbReference>
<dbReference type="PDB" id="2WB1">
    <property type="method" value="X-ray"/>
    <property type="resolution" value="3.52 A"/>
    <property type="chains" value="G/V=1-131"/>
</dbReference>
<dbReference type="PDB" id="2Y0S">
    <property type="method" value="X-ray"/>
    <property type="resolution" value="3.80 A"/>
    <property type="chains" value="G/V=1-131"/>
</dbReference>
<dbReference type="PDB" id="4AYB">
    <property type="method" value="X-ray"/>
    <property type="resolution" value="3.20 A"/>
    <property type="chains" value="G=1-131"/>
</dbReference>
<dbReference type="PDB" id="4V8S">
    <property type="method" value="X-ray"/>
    <property type="resolution" value="4.32 A"/>
    <property type="chains" value="AV/BG=1-131"/>
</dbReference>
<dbReference type="PDBsum" id="2WAQ"/>
<dbReference type="PDBsum" id="2WB1"/>
<dbReference type="PDBsum" id="2Y0S"/>
<dbReference type="PDBsum" id="4AYB"/>
<dbReference type="PDBsum" id="4V8S"/>
<dbReference type="SMR" id="B8YB59"/>
<dbReference type="KEGG" id="sshi:J5U23_03191"/>
<dbReference type="BRENDA" id="2.7.7.6">
    <property type="organism ID" value="6162"/>
</dbReference>
<dbReference type="EvolutionaryTrace" id="B8YB59"/>
<dbReference type="Proteomes" id="UP000694018">
    <property type="component" value="Chromosome"/>
</dbReference>
<dbReference type="GO" id="GO:0005737">
    <property type="term" value="C:cytoplasm"/>
    <property type="evidence" value="ECO:0007669"/>
    <property type="project" value="UniProtKB-SubCell"/>
</dbReference>
<dbReference type="GO" id="GO:0000428">
    <property type="term" value="C:DNA-directed RNA polymerase complex"/>
    <property type="evidence" value="ECO:0000314"/>
    <property type="project" value="UniProtKB"/>
</dbReference>
<dbReference type="GO" id="GO:0003899">
    <property type="term" value="F:DNA-directed RNA polymerase activity"/>
    <property type="evidence" value="ECO:0007669"/>
    <property type="project" value="UniProtKB-UniRule"/>
</dbReference>
<dbReference type="GO" id="GO:0006351">
    <property type="term" value="P:DNA-templated transcription"/>
    <property type="evidence" value="ECO:0007669"/>
    <property type="project" value="UniProtKB-UniRule"/>
</dbReference>
<dbReference type="Gene3D" id="2.40.50.140">
    <property type="entry name" value="Nucleic acid-binding proteins"/>
    <property type="match status" value="1"/>
</dbReference>
<dbReference type="HAMAP" id="MF_00866">
    <property type="entry name" value="RNApol_arch_Rpo8"/>
    <property type="match status" value="1"/>
</dbReference>
<dbReference type="InterPro" id="IPR012340">
    <property type="entry name" value="NA-bd_OB-fold"/>
</dbReference>
<dbReference type="InterPro" id="IPR031555">
    <property type="entry name" value="RNA_pol_Rpo8"/>
</dbReference>
<dbReference type="NCBIfam" id="NF011549">
    <property type="entry name" value="PRK14980.1"/>
    <property type="match status" value="1"/>
</dbReference>
<dbReference type="Pfam" id="PF16992">
    <property type="entry name" value="RNA_pol_RpbG"/>
    <property type="match status" value="1"/>
</dbReference>
<name>RPO8_SACSH</name>
<comment type="function">
    <text evidence="1">DNA-dependent RNA polymerase (RNAP) catalyzes the transcription of DNA into RNA using the four ribonucleoside triphosphates as substrates.</text>
</comment>
<comment type="catalytic activity">
    <reaction evidence="1">
        <text>RNA(n) + a ribonucleoside 5'-triphosphate = RNA(n+1) + diphosphate</text>
        <dbReference type="Rhea" id="RHEA:21248"/>
        <dbReference type="Rhea" id="RHEA-COMP:14527"/>
        <dbReference type="Rhea" id="RHEA-COMP:17342"/>
        <dbReference type="ChEBI" id="CHEBI:33019"/>
        <dbReference type="ChEBI" id="CHEBI:61557"/>
        <dbReference type="ChEBI" id="CHEBI:140395"/>
        <dbReference type="EC" id="2.7.7.6"/>
    </reaction>
</comment>
<comment type="subunit">
    <text evidence="2 3 4">Part of the 13-subunit RNA polymerase complex. Interacts with Rpo1N on the periphery of the clamp head.</text>
</comment>
<comment type="subcellular location">
    <subcellularLocation>
        <location evidence="1 4">Cytoplasm</location>
    </subcellularLocation>
</comment>
<comment type="similarity">
    <text evidence="1">Belongs to the archaeal Rpo8 RNA polymerase subunit family.</text>
</comment>
<comment type="sequence caution" evidence="6">
    <conflict type="erroneous initiation">
        <sequence resource="EMBL-CDS" id="ACL36494"/>
    </conflict>
    <text>Extended N-terminus.</text>
</comment>
<reference evidence="8 9" key="1">
    <citation type="journal article" date="2009" name="PLoS Biol.">
        <title>Evolution of complex RNA polymerases: the complete archaeal RNA polymerase structure.</title>
        <authorList>
            <person name="Korkhin Y."/>
            <person name="Unligil U.M."/>
            <person name="Littlefield O."/>
            <person name="Nelson P.J."/>
            <person name="Stuart D.I."/>
            <person name="Sigler P.B."/>
            <person name="Bell S.D."/>
            <person name="Abrescia N.G."/>
        </authorList>
    </citation>
    <scope>NUCLEOTIDE SEQUENCE [GENOMIC DNA]</scope>
    <scope>X-RAY CRYSTALLOGRAPHY (3.35 ANGSTROMS) OF THE RNA POLYMERASE COMPLEX</scope>
    <scope>SUBUNIT</scope>
    <scope>NOMENCLATURE</scope>
    <source>
        <strain>ATCC 51178 / DSM 5389 / JCM 8931 / NBRC 15437 / B12</strain>
    </source>
</reference>
<reference evidence="7" key="2">
    <citation type="journal article" date="2021" name="Environ. Microbiol.">
        <title>New insights into the diversity and evolution of the archaeal mobilome from three complete genomes of Saccharolobus shibatae.</title>
        <authorList>
            <person name="Medvedeva S."/>
            <person name="Brandt D."/>
            <person name="Cvirkaite-Krupovic V."/>
            <person name="Liu Y."/>
            <person name="Severinov K."/>
            <person name="Ishino S."/>
            <person name="Ishino Y."/>
            <person name="Prangishvili D."/>
            <person name="Kalinowski J."/>
            <person name="Krupovic M."/>
        </authorList>
    </citation>
    <scope>NUCLEOTIDE SEQUENCE [LARGE SCALE GENOMIC DNA]</scope>
    <source>
        <strain>ATCC 51178 / DSM 5389 / JCM 8931 / NBRC 15437 / B12</strain>
    </source>
</reference>
<reference evidence="10" key="3">
    <citation type="journal article" date="2011" name="Biochem. Soc. Trans.">
        <title>Archaeal RNA polymerase: the influence of the protruding stalk in crystal packing and preliminary biophysical analysis of the Rpo13 subunit.</title>
        <authorList>
            <person name="Wojtas M."/>
            <person name="Peralta B."/>
            <person name="Ondiviela M."/>
            <person name="Mogni M."/>
            <person name="Bell S.D."/>
            <person name="Abrescia N.G."/>
        </authorList>
    </citation>
    <scope>X-RAY CRYSTALLOGRAPHY (3.80 ANGSTROMS) OF THE RNA POLYMERASE COMPLEX</scope>
    <scope>SUBUNIT</scope>
    <source>
        <strain>ATCC 51178 / DSM 5389 / JCM 8931 / NBRC 15437 / B12</strain>
    </source>
</reference>
<reference evidence="11 12" key="4">
    <citation type="journal article" date="2012" name="Nucleic Acids Res.">
        <title>Structural and functional analyses of the interaction of archaeal RNA polymerase with DNA.</title>
        <authorList>
            <person name="Wojtas M.N."/>
            <person name="Mogni M."/>
            <person name="Millet O."/>
            <person name="Bell S.D."/>
            <person name="Abrescia N.G."/>
        </authorList>
    </citation>
    <scope>X-RAY CRYSTALLOGRAPHY (3.20 ANGSTROMS) OF THE RNA POLYMERASE COMPLEX WITH AND WITHOUT DNA</scope>
    <scope>SUBUNIT</scope>
    <scope>SUBCELLULAR LOCATION</scope>
    <source>
        <strain>ATCC 51178 / DSM 5389 / JCM 8931 / NBRC 15437 / B12</strain>
    </source>
</reference>
<evidence type="ECO:0000255" key="1">
    <source>
        <dbReference type="HAMAP-Rule" id="MF_00866"/>
    </source>
</evidence>
<evidence type="ECO:0000269" key="2">
    <source>
    </source>
</evidence>
<evidence type="ECO:0000269" key="3">
    <source>
    </source>
</evidence>
<evidence type="ECO:0000269" key="4">
    <source>
    </source>
</evidence>
<evidence type="ECO:0000303" key="5">
    <source>
    </source>
</evidence>
<evidence type="ECO:0000305" key="6"/>
<evidence type="ECO:0000312" key="7">
    <source>
        <dbReference type="EMBL" id="QXJ30293.1"/>
    </source>
</evidence>
<evidence type="ECO:0007744" key="8">
    <source>
        <dbReference type="PDB" id="2WAQ"/>
    </source>
</evidence>
<evidence type="ECO:0007744" key="9">
    <source>
        <dbReference type="PDB" id="2WB1"/>
    </source>
</evidence>
<evidence type="ECO:0007744" key="10">
    <source>
        <dbReference type="PDB" id="2Y0S"/>
    </source>
</evidence>
<evidence type="ECO:0007744" key="11">
    <source>
        <dbReference type="PDB" id="4AYB"/>
    </source>
</evidence>
<evidence type="ECO:0007744" key="12">
    <source>
        <dbReference type="PDB" id="4V8S"/>
    </source>
</evidence>
<evidence type="ECO:0007829" key="13">
    <source>
        <dbReference type="PDB" id="4AYB"/>
    </source>
</evidence>
<organism>
    <name type="scientific">Saccharolobus shibatae (strain ATCC 51178 / DSM 5389 / JCM 8931 / NBRC 15437 / B12)</name>
    <name type="common">Sulfolobus shibatae</name>
    <dbReference type="NCBI Taxonomy" id="523848"/>
    <lineage>
        <taxon>Archaea</taxon>
        <taxon>Thermoproteota</taxon>
        <taxon>Thermoprotei</taxon>
        <taxon>Sulfolobales</taxon>
        <taxon>Sulfolobaceae</taxon>
        <taxon>Saccharolobus</taxon>
    </lineage>
</organism>
<protein>
    <recommendedName>
        <fullName evidence="1 5">DNA-directed RNA polymerase subunit Rpo8</fullName>
        <ecNumber evidence="1">2.7.7.6</ecNumber>
    </recommendedName>
    <alternativeName>
        <fullName evidence="1">DNA-directed RNA polymerase, subunit G</fullName>
    </alternativeName>
    <alternativeName>
        <fullName>RNA polymerase subunit 8</fullName>
    </alternativeName>
</protein>
<keyword id="KW-0002">3D-structure</keyword>
<keyword id="KW-0963">Cytoplasm</keyword>
<keyword id="KW-0240">DNA-directed RNA polymerase</keyword>
<keyword id="KW-0548">Nucleotidyltransferase</keyword>
<keyword id="KW-0804">Transcription</keyword>
<keyword id="KW-0808">Transferase</keyword>
<proteinExistence type="evidence at protein level"/>